<name>AATB_METST</name>
<dbReference type="EMBL" id="CP000102">
    <property type="protein sequence ID" value="ABC57515.1"/>
    <property type="molecule type" value="Genomic_DNA"/>
</dbReference>
<dbReference type="RefSeq" id="WP_011406714.1">
    <property type="nucleotide sequence ID" value="NC_007681.1"/>
</dbReference>
<dbReference type="SMR" id="Q2NF88"/>
<dbReference type="STRING" id="339860.Msp_1134"/>
<dbReference type="KEGG" id="mst:Msp_1134"/>
<dbReference type="eggNOG" id="arCOG00865">
    <property type="taxonomic scope" value="Archaea"/>
</dbReference>
<dbReference type="HOGENOM" id="CLU_022916_0_0_2"/>
<dbReference type="OrthoDB" id="32941at2157"/>
<dbReference type="Proteomes" id="UP000001931">
    <property type="component" value="Chromosome"/>
</dbReference>
<dbReference type="GO" id="GO:0005886">
    <property type="term" value="C:plasma membrane"/>
    <property type="evidence" value="ECO:0007669"/>
    <property type="project" value="UniProtKB-SubCell"/>
</dbReference>
<dbReference type="GO" id="GO:0033178">
    <property type="term" value="C:proton-transporting two-sector ATPase complex, catalytic domain"/>
    <property type="evidence" value="ECO:0007669"/>
    <property type="project" value="InterPro"/>
</dbReference>
<dbReference type="GO" id="GO:0005524">
    <property type="term" value="F:ATP binding"/>
    <property type="evidence" value="ECO:0007669"/>
    <property type="project" value="UniProtKB-UniRule"/>
</dbReference>
<dbReference type="GO" id="GO:0046933">
    <property type="term" value="F:proton-transporting ATP synthase activity, rotational mechanism"/>
    <property type="evidence" value="ECO:0007669"/>
    <property type="project" value="UniProtKB-UniRule"/>
</dbReference>
<dbReference type="GO" id="GO:0042777">
    <property type="term" value="P:proton motive force-driven plasma membrane ATP synthesis"/>
    <property type="evidence" value="ECO:0007669"/>
    <property type="project" value="UniProtKB-UniRule"/>
</dbReference>
<dbReference type="CDD" id="cd18112">
    <property type="entry name" value="ATP-synt_V_A-type_beta_C"/>
    <property type="match status" value="1"/>
</dbReference>
<dbReference type="CDD" id="cd18118">
    <property type="entry name" value="ATP-synt_V_A-type_beta_N"/>
    <property type="match status" value="1"/>
</dbReference>
<dbReference type="CDD" id="cd01135">
    <property type="entry name" value="V_A-ATPase_B"/>
    <property type="match status" value="1"/>
</dbReference>
<dbReference type="Gene3D" id="3.40.50.12240">
    <property type="match status" value="1"/>
</dbReference>
<dbReference type="HAMAP" id="MF_00310">
    <property type="entry name" value="ATP_synth_B_arch"/>
    <property type="match status" value="1"/>
</dbReference>
<dbReference type="InterPro" id="IPR055190">
    <property type="entry name" value="ATP-synt_VA_C"/>
</dbReference>
<dbReference type="InterPro" id="IPR020003">
    <property type="entry name" value="ATPase_a/bsu_AS"/>
</dbReference>
<dbReference type="InterPro" id="IPR005724">
    <property type="entry name" value="ATPase_A1-cplx_bsu"/>
</dbReference>
<dbReference type="InterPro" id="IPR004100">
    <property type="entry name" value="ATPase_F1/V1/A1_a/bsu_N"/>
</dbReference>
<dbReference type="InterPro" id="IPR036121">
    <property type="entry name" value="ATPase_F1/V1/A1_a/bsu_N_sf"/>
</dbReference>
<dbReference type="InterPro" id="IPR000194">
    <property type="entry name" value="ATPase_F1/V1/A1_a/bsu_nucl-bd"/>
</dbReference>
<dbReference type="InterPro" id="IPR027417">
    <property type="entry name" value="P-loop_NTPase"/>
</dbReference>
<dbReference type="InterPro" id="IPR022879">
    <property type="entry name" value="V-ATPase_su_B/beta"/>
</dbReference>
<dbReference type="NCBIfam" id="TIGR01041">
    <property type="entry name" value="ATP_syn_B_arch"/>
    <property type="match status" value="1"/>
</dbReference>
<dbReference type="NCBIfam" id="NF003235">
    <property type="entry name" value="PRK04196.1"/>
    <property type="match status" value="1"/>
</dbReference>
<dbReference type="PANTHER" id="PTHR43389">
    <property type="entry name" value="V-TYPE PROTON ATPASE SUBUNIT B"/>
    <property type="match status" value="1"/>
</dbReference>
<dbReference type="PANTHER" id="PTHR43389:SF4">
    <property type="entry name" value="V-TYPE PROTON ATPASE SUBUNIT B"/>
    <property type="match status" value="1"/>
</dbReference>
<dbReference type="Pfam" id="PF00006">
    <property type="entry name" value="ATP-synt_ab"/>
    <property type="match status" value="1"/>
</dbReference>
<dbReference type="Pfam" id="PF02874">
    <property type="entry name" value="ATP-synt_ab_N"/>
    <property type="match status" value="1"/>
</dbReference>
<dbReference type="Pfam" id="PF22919">
    <property type="entry name" value="ATP-synt_VA_C"/>
    <property type="match status" value="1"/>
</dbReference>
<dbReference type="PIRSF" id="PIRSF039114">
    <property type="entry name" value="V-ATPsynth_beta/V-ATPase_B"/>
    <property type="match status" value="1"/>
</dbReference>
<dbReference type="SUPFAM" id="SSF47917">
    <property type="entry name" value="C-terminal domain of alpha and beta subunits of F1 ATP synthase"/>
    <property type="match status" value="1"/>
</dbReference>
<dbReference type="SUPFAM" id="SSF50615">
    <property type="entry name" value="N-terminal domain of alpha and beta subunits of F1 ATP synthase"/>
    <property type="match status" value="1"/>
</dbReference>
<dbReference type="SUPFAM" id="SSF52540">
    <property type="entry name" value="P-loop containing nucleoside triphosphate hydrolases"/>
    <property type="match status" value="1"/>
</dbReference>
<dbReference type="PROSITE" id="PS00152">
    <property type="entry name" value="ATPASE_ALPHA_BETA"/>
    <property type="match status" value="1"/>
</dbReference>
<reference key="1">
    <citation type="journal article" date="2006" name="J. Bacteriol.">
        <title>The genome sequence of Methanosphaera stadtmanae reveals why this human intestinal archaeon is restricted to methanol and H2 for methane formation and ATP synthesis.</title>
        <authorList>
            <person name="Fricke W.F."/>
            <person name="Seedorf H."/>
            <person name="Henne A."/>
            <person name="Kruer M."/>
            <person name="Liesegang H."/>
            <person name="Hedderich R."/>
            <person name="Gottschalk G."/>
            <person name="Thauer R.K."/>
        </authorList>
    </citation>
    <scope>NUCLEOTIDE SEQUENCE [LARGE SCALE GENOMIC DNA]</scope>
    <source>
        <strain>ATCC 43021 / DSM 3091 / JCM 11832 / MCB-3</strain>
    </source>
</reference>
<proteinExistence type="inferred from homology"/>
<sequence>MNDVDIKTREYTTVSEVAGPLMVVQGVEGAAYNEIVEIETPAGENRTGQVLEVKEDIAVVQVFEGTSDLNTESTKVRFTGETAKIGLSTDMLGRIFNGIGKPIDGGPDIIPDQELDVNGSPMNPSAREFPAEFIQTGISTIDGMNTLVRGQKLPIFSGSGLPHNELAAQIARQAKVIAEDSEFAVIFGAMGITHEEANFFMNEFEQTGALERVTVFMNLADDPAIERIMTPKMALTTAEYLAFEKGMHVLVILTDITNYCEALREISSARNEVPGRRGYPGYMYTDLAGMYERAGRINGKEGSITQMPILVMPQDDITHPIPDLTGYITEGQVVLSRELDRTGIYPPVDVLPSLSRLMSGGIGEGRTREDHSGVSDQLYAAYAEGRDLRDLTAVVGEEALTDRDRKFLKFADEFEDKFIRQSKDEDRSIQETLDLGWKLLSILPKTELKRVKDQYVEQYLPQSETEE</sequence>
<accession>Q2NF88</accession>
<feature type="chain" id="PRO_0000322502" description="A-type ATP synthase subunit B">
    <location>
        <begin position="1"/>
        <end position="467"/>
    </location>
</feature>
<keyword id="KW-0066">ATP synthesis</keyword>
<keyword id="KW-1003">Cell membrane</keyword>
<keyword id="KW-0375">Hydrogen ion transport</keyword>
<keyword id="KW-0406">Ion transport</keyword>
<keyword id="KW-0472">Membrane</keyword>
<keyword id="KW-1185">Reference proteome</keyword>
<keyword id="KW-0813">Transport</keyword>
<comment type="function">
    <text evidence="1">Component of the A-type ATP synthase that produces ATP from ADP in the presence of a proton gradient across the membrane. The B chain is a regulatory subunit.</text>
</comment>
<comment type="subunit">
    <text evidence="1">Has multiple subunits with at least A(3), B(3), C, D, E, F, H, I and proteolipid K(x).</text>
</comment>
<comment type="subcellular location">
    <subcellularLocation>
        <location evidence="1">Cell membrane</location>
        <topology evidence="1">Peripheral membrane protein</topology>
    </subcellularLocation>
</comment>
<comment type="similarity">
    <text evidence="1">Belongs to the ATPase alpha/beta chains family.</text>
</comment>
<protein>
    <recommendedName>
        <fullName evidence="1">A-type ATP synthase subunit B</fullName>
    </recommendedName>
</protein>
<gene>
    <name evidence="1" type="primary">atpB</name>
    <name type="ordered locus">Msp_1134</name>
</gene>
<evidence type="ECO:0000255" key="1">
    <source>
        <dbReference type="HAMAP-Rule" id="MF_00310"/>
    </source>
</evidence>
<organism>
    <name type="scientific">Methanosphaera stadtmanae (strain ATCC 43021 / DSM 3091 / JCM 11832 / MCB-3)</name>
    <dbReference type="NCBI Taxonomy" id="339860"/>
    <lineage>
        <taxon>Archaea</taxon>
        <taxon>Methanobacteriati</taxon>
        <taxon>Methanobacteriota</taxon>
        <taxon>Methanomada group</taxon>
        <taxon>Methanobacteria</taxon>
        <taxon>Methanobacteriales</taxon>
        <taxon>Methanobacteriaceae</taxon>
        <taxon>Methanosphaera</taxon>
    </lineage>
</organism>